<evidence type="ECO:0000255" key="1">
    <source>
        <dbReference type="PROSITE-ProRule" id="PRU00408"/>
    </source>
</evidence>
<evidence type="ECO:0000305" key="2"/>
<dbReference type="EMBL" id="M22974">
    <property type="protein sequence ID" value="AAA47582.1"/>
    <property type="molecule type" value="Genomic_RNA"/>
</dbReference>
<dbReference type="SMR" id="P12500"/>
<dbReference type="GO" id="GO:0004190">
    <property type="term" value="F:aspartic-type endopeptidase activity"/>
    <property type="evidence" value="ECO:0007669"/>
    <property type="project" value="UniProtKB-KW"/>
</dbReference>
<dbReference type="GO" id="GO:0035613">
    <property type="term" value="F:RNA stem-loop binding"/>
    <property type="evidence" value="ECO:0007669"/>
    <property type="project" value="TreeGrafter"/>
</dbReference>
<dbReference type="GO" id="GO:0003964">
    <property type="term" value="F:RNA-directed DNA polymerase activity"/>
    <property type="evidence" value="ECO:0007669"/>
    <property type="project" value="UniProtKB-KW"/>
</dbReference>
<dbReference type="GO" id="GO:0004523">
    <property type="term" value="F:RNA-DNA hybrid ribonuclease activity"/>
    <property type="evidence" value="ECO:0007669"/>
    <property type="project" value="InterPro"/>
</dbReference>
<dbReference type="GO" id="GO:0015074">
    <property type="term" value="P:DNA integration"/>
    <property type="evidence" value="ECO:0007669"/>
    <property type="project" value="UniProtKB-KW"/>
</dbReference>
<dbReference type="GO" id="GO:0006310">
    <property type="term" value="P:DNA recombination"/>
    <property type="evidence" value="ECO:0007669"/>
    <property type="project" value="UniProtKB-KW"/>
</dbReference>
<dbReference type="GO" id="GO:0006508">
    <property type="term" value="P:proteolysis"/>
    <property type="evidence" value="ECO:0007669"/>
    <property type="project" value="UniProtKB-KW"/>
</dbReference>
<dbReference type="GO" id="GO:0039657">
    <property type="term" value="P:symbiont-mediated suppression of host gene expression"/>
    <property type="evidence" value="ECO:0007669"/>
    <property type="project" value="UniProtKB-KW"/>
</dbReference>
<dbReference type="Gene3D" id="3.30.70.270">
    <property type="match status" value="1"/>
</dbReference>
<dbReference type="Gene3D" id="3.30.420.10">
    <property type="entry name" value="Ribonuclease H-like superfamily/Ribonuclease H"/>
    <property type="match status" value="1"/>
</dbReference>
<dbReference type="InterPro" id="IPR043128">
    <property type="entry name" value="Rev_trsase/Diguanyl_cyclase"/>
</dbReference>
<dbReference type="InterPro" id="IPR012337">
    <property type="entry name" value="RNaseH-like_sf"/>
</dbReference>
<dbReference type="InterPro" id="IPR002156">
    <property type="entry name" value="RNaseH_domain"/>
</dbReference>
<dbReference type="InterPro" id="IPR036397">
    <property type="entry name" value="RNaseH_sf"/>
</dbReference>
<dbReference type="PANTHER" id="PTHR41694">
    <property type="entry name" value="ENDOGENOUS RETROVIRUS GROUP K MEMBER POL PROTEIN"/>
    <property type="match status" value="1"/>
</dbReference>
<dbReference type="PANTHER" id="PTHR41694:SF3">
    <property type="entry name" value="RNA-DIRECTED DNA POLYMERASE-RELATED"/>
    <property type="match status" value="1"/>
</dbReference>
<dbReference type="Pfam" id="PF00075">
    <property type="entry name" value="RNase_H"/>
    <property type="match status" value="1"/>
</dbReference>
<dbReference type="SUPFAM" id="SSF53098">
    <property type="entry name" value="Ribonuclease H-like"/>
    <property type="match status" value="1"/>
</dbReference>
<dbReference type="PROSITE" id="PS50879">
    <property type="entry name" value="RNASE_H_1"/>
    <property type="match status" value="1"/>
</dbReference>
<comment type="function">
    <text>During replicative cycle of retroviruses, the reverse-transcribed viral DNA is integrated into the host chromosome by the viral integrase enzyme. RNase H activity is associated with the reverse transcriptase.</text>
</comment>
<comment type="miscellaneous">
    <text>This is an African green monkey isolate.</text>
</comment>
<comment type="similarity">
    <text evidence="2">Belongs to the retroviral Pol polyprotein family.</text>
</comment>
<reference key="1">
    <citation type="journal article" date="1989" name="J. Virol.">
        <title>Extensive genetic variability of simian immunodeficiency virus from African green monkeys.</title>
        <authorList>
            <person name="Li Y."/>
            <person name="Naidu Y.M."/>
            <person name="Daniel M.D."/>
            <person name="Desrosiers R.C."/>
        </authorList>
    </citation>
    <scope>NUCLEOTIDE SEQUENCE [GENOMIC RNA]</scope>
</reference>
<organismHost>
    <name type="scientific">Cercopithecidae</name>
    <name type="common">Old World monkeys</name>
    <dbReference type="NCBI Taxonomy" id="9527"/>
</organismHost>
<accession>P12500</accession>
<feature type="chain" id="PRO_0000085308" description="Pol polyprotein">
    <location>
        <begin position="1" status="less than"/>
        <end position="100" status="greater than"/>
    </location>
</feature>
<feature type="domain" description="RNase H type-1" evidence="1">
    <location>
        <begin position="32"/>
        <end position="100" status="greater than"/>
    </location>
</feature>
<feature type="non-terminal residue">
    <location>
        <position position="1"/>
    </location>
</feature>
<feature type="non-terminal residue">
    <location>
        <position position="100"/>
    </location>
</feature>
<keyword id="KW-0064">Aspartyl protease</keyword>
<keyword id="KW-0229">DNA integration</keyword>
<keyword id="KW-0233">DNA recombination</keyword>
<keyword id="KW-0255">Endonuclease</keyword>
<keyword id="KW-1262">Eukaryotic host gene expression shutoff by virus</keyword>
<keyword id="KW-1193">Eukaryotic host translation shutoff by virus</keyword>
<keyword id="KW-1190">Host gene expression shutoff by virus</keyword>
<keyword id="KW-0945">Host-virus interaction</keyword>
<keyword id="KW-0378">Hydrolase</keyword>
<keyword id="KW-0511">Multifunctional enzyme</keyword>
<keyword id="KW-0540">Nuclease</keyword>
<keyword id="KW-0548">Nucleotidyltransferase</keyword>
<keyword id="KW-0645">Protease</keyword>
<keyword id="KW-0695">RNA-directed DNA polymerase</keyword>
<keyword id="KW-0808">Transferase</keyword>
<organism>
    <name type="scientific">Simian immunodeficiency virus agm.vervet (isolate AGM266)</name>
    <name type="common">SIV-agm.ver</name>
    <name type="synonym">Simian immunodeficiency virus African green monkey vervet</name>
    <dbReference type="NCBI Taxonomy" id="11728"/>
    <lineage>
        <taxon>Viruses</taxon>
        <taxon>Riboviria</taxon>
        <taxon>Pararnavirae</taxon>
        <taxon>Artverviricota</taxon>
        <taxon>Revtraviricetes</taxon>
        <taxon>Ortervirales</taxon>
        <taxon>Retroviridae</taxon>
        <taxon>Orthoretrovirinae</taxon>
        <taxon>Lentivirus</taxon>
        <taxon>Simian immunodeficiency virus</taxon>
    </lineage>
</organism>
<sequence>AGLLAGSWIPDWTFVSVPPLVTLWYTLTKEPIPGEDVYYVDGACNRNSREGKAGYITQQGKQRVEKLENTTNQQAELTAIKMALEDSGPRVNIVTDSQYA</sequence>
<name>POL_SIVV2</name>
<proteinExistence type="inferred from homology"/>
<protein>
    <recommendedName>
        <fullName>Pol polyprotein</fullName>
    </recommendedName>
</protein>
<gene>
    <name type="primary">pol</name>
</gene>